<evidence type="ECO:0000255" key="1">
    <source>
        <dbReference type="HAMAP-Rule" id="MF_01864"/>
    </source>
</evidence>
<evidence type="ECO:0000255" key="2">
    <source>
        <dbReference type="PROSITE-ProRule" id="PRU01266"/>
    </source>
</evidence>
<evidence type="ECO:0000256" key="3">
    <source>
        <dbReference type="SAM" id="MobiDB-lite"/>
    </source>
</evidence>
<reference key="1">
    <citation type="journal article" date="2008" name="J. Bacteriol.">
        <title>Genome of the actinomycete plant pathogen Clavibacter michiganensis subsp. sepedonicus suggests recent niche adaptation.</title>
        <authorList>
            <person name="Bentley S.D."/>
            <person name="Corton C."/>
            <person name="Brown S.E."/>
            <person name="Barron A."/>
            <person name="Clark L."/>
            <person name="Doggett J."/>
            <person name="Harris B."/>
            <person name="Ormond D."/>
            <person name="Quail M.A."/>
            <person name="May G."/>
            <person name="Francis D."/>
            <person name="Knudson D."/>
            <person name="Parkhill J."/>
            <person name="Ishimaru C.A."/>
        </authorList>
    </citation>
    <scope>NUCLEOTIDE SEQUENCE [LARGE SCALE GENOMIC DNA]</scope>
    <source>
        <strain>ATCC 33113 / DSM 20744 / JCM 9667 / LMG 2889 / ICMP 2535 / C-1</strain>
    </source>
</reference>
<keyword id="KW-0004">4Fe-4S</keyword>
<keyword id="KW-0963">Cytoplasm</keyword>
<keyword id="KW-0408">Iron</keyword>
<keyword id="KW-0411">Iron-sulfur</keyword>
<keyword id="KW-0479">Metal-binding</keyword>
<keyword id="KW-0949">S-adenosyl-L-methionine</keyword>
<keyword id="KW-0808">Transferase</keyword>
<keyword id="KW-0819">tRNA processing</keyword>
<accession>B0RGZ1</accession>
<name>MIAB_CLASE</name>
<proteinExistence type="inferred from homology"/>
<dbReference type="EC" id="2.8.4.3" evidence="1"/>
<dbReference type="EMBL" id="AM849034">
    <property type="protein sequence ID" value="CAQ01325.1"/>
    <property type="molecule type" value="Genomic_DNA"/>
</dbReference>
<dbReference type="RefSeq" id="WP_012298603.1">
    <property type="nucleotide sequence ID" value="NZ_MZMN01000003.1"/>
</dbReference>
<dbReference type="SMR" id="B0RGZ1"/>
<dbReference type="STRING" id="31964.CMS1210"/>
<dbReference type="KEGG" id="cms:CMS1210"/>
<dbReference type="eggNOG" id="COG0621">
    <property type="taxonomic scope" value="Bacteria"/>
</dbReference>
<dbReference type="HOGENOM" id="CLU_018697_2_2_11"/>
<dbReference type="OrthoDB" id="9805215at2"/>
<dbReference type="Proteomes" id="UP000001318">
    <property type="component" value="Chromosome"/>
</dbReference>
<dbReference type="GO" id="GO:0005829">
    <property type="term" value="C:cytosol"/>
    <property type="evidence" value="ECO:0007669"/>
    <property type="project" value="TreeGrafter"/>
</dbReference>
<dbReference type="GO" id="GO:0051539">
    <property type="term" value="F:4 iron, 4 sulfur cluster binding"/>
    <property type="evidence" value="ECO:0007669"/>
    <property type="project" value="UniProtKB-UniRule"/>
</dbReference>
<dbReference type="GO" id="GO:0046872">
    <property type="term" value="F:metal ion binding"/>
    <property type="evidence" value="ECO:0007669"/>
    <property type="project" value="UniProtKB-KW"/>
</dbReference>
<dbReference type="GO" id="GO:0035597">
    <property type="term" value="F:N6-isopentenyladenosine methylthiotransferase activity"/>
    <property type="evidence" value="ECO:0007669"/>
    <property type="project" value="TreeGrafter"/>
</dbReference>
<dbReference type="CDD" id="cd01335">
    <property type="entry name" value="Radical_SAM"/>
    <property type="match status" value="1"/>
</dbReference>
<dbReference type="FunFam" id="3.40.50.12160:FF:000003">
    <property type="entry name" value="CDK5 regulatory subunit-associated protein 1"/>
    <property type="match status" value="1"/>
</dbReference>
<dbReference type="FunFam" id="3.80.30.20:FF:000001">
    <property type="entry name" value="tRNA-2-methylthio-N(6)-dimethylallyladenosine synthase 2"/>
    <property type="match status" value="1"/>
</dbReference>
<dbReference type="Gene3D" id="3.40.50.12160">
    <property type="entry name" value="Methylthiotransferase, N-terminal domain"/>
    <property type="match status" value="1"/>
</dbReference>
<dbReference type="Gene3D" id="3.80.30.20">
    <property type="entry name" value="tm_1862 like domain"/>
    <property type="match status" value="1"/>
</dbReference>
<dbReference type="HAMAP" id="MF_01864">
    <property type="entry name" value="tRNA_metthiotr_MiaB"/>
    <property type="match status" value="1"/>
</dbReference>
<dbReference type="InterPro" id="IPR006638">
    <property type="entry name" value="Elp3/MiaA/NifB-like_rSAM"/>
</dbReference>
<dbReference type="InterPro" id="IPR005839">
    <property type="entry name" value="Methylthiotransferase"/>
</dbReference>
<dbReference type="InterPro" id="IPR020612">
    <property type="entry name" value="Methylthiotransferase_CS"/>
</dbReference>
<dbReference type="InterPro" id="IPR013848">
    <property type="entry name" value="Methylthiotransferase_N"/>
</dbReference>
<dbReference type="InterPro" id="IPR038135">
    <property type="entry name" value="Methylthiotransferase_N_sf"/>
</dbReference>
<dbReference type="InterPro" id="IPR006463">
    <property type="entry name" value="MiaB_methiolase"/>
</dbReference>
<dbReference type="InterPro" id="IPR007197">
    <property type="entry name" value="rSAM"/>
</dbReference>
<dbReference type="InterPro" id="IPR023404">
    <property type="entry name" value="rSAM_horseshoe"/>
</dbReference>
<dbReference type="InterPro" id="IPR002792">
    <property type="entry name" value="TRAM_dom"/>
</dbReference>
<dbReference type="NCBIfam" id="TIGR01574">
    <property type="entry name" value="miaB-methiolase"/>
    <property type="match status" value="1"/>
</dbReference>
<dbReference type="NCBIfam" id="TIGR00089">
    <property type="entry name" value="MiaB/RimO family radical SAM methylthiotransferase"/>
    <property type="match status" value="1"/>
</dbReference>
<dbReference type="PANTHER" id="PTHR43020">
    <property type="entry name" value="CDK5 REGULATORY SUBUNIT-ASSOCIATED PROTEIN 1"/>
    <property type="match status" value="1"/>
</dbReference>
<dbReference type="PANTHER" id="PTHR43020:SF2">
    <property type="entry name" value="MITOCHONDRIAL TRNA METHYLTHIOTRANSFERASE CDK5RAP1"/>
    <property type="match status" value="1"/>
</dbReference>
<dbReference type="Pfam" id="PF04055">
    <property type="entry name" value="Radical_SAM"/>
    <property type="match status" value="1"/>
</dbReference>
<dbReference type="Pfam" id="PF00919">
    <property type="entry name" value="UPF0004"/>
    <property type="match status" value="1"/>
</dbReference>
<dbReference type="SFLD" id="SFLDF00273">
    <property type="entry name" value="(dimethylallyl)adenosine_tRNA"/>
    <property type="match status" value="1"/>
</dbReference>
<dbReference type="SFLD" id="SFLDG01082">
    <property type="entry name" value="B12-binding_domain_containing"/>
    <property type="match status" value="1"/>
</dbReference>
<dbReference type="SFLD" id="SFLDG01061">
    <property type="entry name" value="methylthiotransferase"/>
    <property type="match status" value="1"/>
</dbReference>
<dbReference type="SMART" id="SM00729">
    <property type="entry name" value="Elp3"/>
    <property type="match status" value="1"/>
</dbReference>
<dbReference type="SUPFAM" id="SSF102114">
    <property type="entry name" value="Radical SAM enzymes"/>
    <property type="match status" value="1"/>
</dbReference>
<dbReference type="PROSITE" id="PS51449">
    <property type="entry name" value="MTTASE_N"/>
    <property type="match status" value="1"/>
</dbReference>
<dbReference type="PROSITE" id="PS01278">
    <property type="entry name" value="MTTASE_RADICAL"/>
    <property type="match status" value="1"/>
</dbReference>
<dbReference type="PROSITE" id="PS51918">
    <property type="entry name" value="RADICAL_SAM"/>
    <property type="match status" value="1"/>
</dbReference>
<dbReference type="PROSITE" id="PS50926">
    <property type="entry name" value="TRAM"/>
    <property type="match status" value="1"/>
</dbReference>
<gene>
    <name evidence="1" type="primary">miaB</name>
    <name type="ordered locus">CMS1210</name>
</gene>
<protein>
    <recommendedName>
        <fullName evidence="1">tRNA-2-methylthio-N(6)-dimethylallyladenosine synthase</fullName>
        <ecNumber evidence="1">2.8.4.3</ecNumber>
    </recommendedName>
    <alternativeName>
        <fullName evidence="1">(Dimethylallyl)adenosine tRNA methylthiotransferase MiaB</fullName>
    </alternativeName>
    <alternativeName>
        <fullName evidence="1">tRNA-i(6)A37 methylthiotransferase</fullName>
    </alternativeName>
</protein>
<feature type="chain" id="PRO_0000374218" description="tRNA-2-methylthio-N(6)-dimethylallyladenosine synthase">
    <location>
        <begin position="1"/>
        <end position="530"/>
    </location>
</feature>
<feature type="domain" description="MTTase N-terminal" evidence="1">
    <location>
        <begin position="19"/>
        <end position="134"/>
    </location>
</feature>
<feature type="domain" description="Radical SAM core" evidence="2">
    <location>
        <begin position="157"/>
        <end position="387"/>
    </location>
</feature>
<feature type="domain" description="TRAM" evidence="1">
    <location>
        <begin position="390"/>
        <end position="460"/>
    </location>
</feature>
<feature type="region of interest" description="Disordered" evidence="3">
    <location>
        <begin position="509"/>
        <end position="530"/>
    </location>
</feature>
<feature type="binding site" evidence="1">
    <location>
        <position position="28"/>
    </location>
    <ligand>
        <name>[4Fe-4S] cluster</name>
        <dbReference type="ChEBI" id="CHEBI:49883"/>
        <label>1</label>
    </ligand>
</feature>
<feature type="binding site" evidence="1">
    <location>
        <position position="63"/>
    </location>
    <ligand>
        <name>[4Fe-4S] cluster</name>
        <dbReference type="ChEBI" id="CHEBI:49883"/>
        <label>1</label>
    </ligand>
</feature>
<feature type="binding site" evidence="1">
    <location>
        <position position="97"/>
    </location>
    <ligand>
        <name>[4Fe-4S] cluster</name>
        <dbReference type="ChEBI" id="CHEBI:49883"/>
        <label>1</label>
    </ligand>
</feature>
<feature type="binding site" evidence="1">
    <location>
        <position position="171"/>
    </location>
    <ligand>
        <name>[4Fe-4S] cluster</name>
        <dbReference type="ChEBI" id="CHEBI:49883"/>
        <label>2</label>
        <note>4Fe-4S-S-AdoMet</note>
    </ligand>
</feature>
<feature type="binding site" evidence="1">
    <location>
        <position position="175"/>
    </location>
    <ligand>
        <name>[4Fe-4S] cluster</name>
        <dbReference type="ChEBI" id="CHEBI:49883"/>
        <label>2</label>
        <note>4Fe-4S-S-AdoMet</note>
    </ligand>
</feature>
<feature type="binding site" evidence="1">
    <location>
        <position position="178"/>
    </location>
    <ligand>
        <name>[4Fe-4S] cluster</name>
        <dbReference type="ChEBI" id="CHEBI:49883"/>
        <label>2</label>
        <note>4Fe-4S-S-AdoMet</note>
    </ligand>
</feature>
<sequence>MSTVAEHVRAAPSSVDRPRTYEVRTYGCQMNVHDSERLTGSLEAAGYVSAEGAEADIVVINTCAVRENADNKLYGNLGHLAGVKRRHEGMQIAVGGCLAQKDRATVLEKAPWVDVVFGTHNMGALPTLLERARHNGEAQLEILESLETFPSTLPTKRDEIASGWVSISVGCNNTCTFCIVPALRGKEKDRRPGDILAEIQALVDDGAVEVTLLGQNVNSYGVEFGDRQAFGKLLRAAGAIEGLERIRFTSPHPAAFTDDVIDAMAETPAVMPQLHMPLQSGSDRILKAMRRSYRSERFLGILDRVRTRVPDAAITTDIIVGFPGETEEDFQETLRVVEAARFSSAFTFQYSIRPGTPAATMEEQVPADVVKERYGRLTALQERISHEENQRVVGRTVEVLVSAHEGRKDGDTRRVTGRAQDGRLVHLDVPEGSAEPRPGDAVDVEVTRAAPFHLIADSVDGAPLRIRRTRAGDAWERAQADSCGVPTPATGASAGAAPRVSLGLPTLRVPTTASTSAPVGDGSAHPRHRA</sequence>
<comment type="function">
    <text evidence="1">Catalyzes the methylthiolation of N6-(dimethylallyl)adenosine (i(6)A), leading to the formation of 2-methylthio-N6-(dimethylallyl)adenosine (ms(2)i(6)A) at position 37 in tRNAs that read codons beginning with uridine.</text>
</comment>
<comment type="catalytic activity">
    <reaction evidence="1">
        <text>N(6)-dimethylallyladenosine(37) in tRNA + (sulfur carrier)-SH + AH2 + 2 S-adenosyl-L-methionine = 2-methylsulfanyl-N(6)-dimethylallyladenosine(37) in tRNA + (sulfur carrier)-H + 5'-deoxyadenosine + L-methionine + A + S-adenosyl-L-homocysteine + 2 H(+)</text>
        <dbReference type="Rhea" id="RHEA:37067"/>
        <dbReference type="Rhea" id="RHEA-COMP:10375"/>
        <dbReference type="Rhea" id="RHEA-COMP:10376"/>
        <dbReference type="Rhea" id="RHEA-COMP:14737"/>
        <dbReference type="Rhea" id="RHEA-COMP:14739"/>
        <dbReference type="ChEBI" id="CHEBI:13193"/>
        <dbReference type="ChEBI" id="CHEBI:15378"/>
        <dbReference type="ChEBI" id="CHEBI:17319"/>
        <dbReference type="ChEBI" id="CHEBI:17499"/>
        <dbReference type="ChEBI" id="CHEBI:29917"/>
        <dbReference type="ChEBI" id="CHEBI:57844"/>
        <dbReference type="ChEBI" id="CHEBI:57856"/>
        <dbReference type="ChEBI" id="CHEBI:59789"/>
        <dbReference type="ChEBI" id="CHEBI:64428"/>
        <dbReference type="ChEBI" id="CHEBI:74415"/>
        <dbReference type="ChEBI" id="CHEBI:74417"/>
        <dbReference type="EC" id="2.8.4.3"/>
    </reaction>
</comment>
<comment type="cofactor">
    <cofactor evidence="1">
        <name>[4Fe-4S] cluster</name>
        <dbReference type="ChEBI" id="CHEBI:49883"/>
    </cofactor>
    <text evidence="1">Binds 2 [4Fe-4S] clusters. One cluster is coordinated with 3 cysteines and an exchangeable S-adenosyl-L-methionine.</text>
</comment>
<comment type="subunit">
    <text evidence="1">Monomer.</text>
</comment>
<comment type="subcellular location">
    <subcellularLocation>
        <location evidence="1">Cytoplasm</location>
    </subcellularLocation>
</comment>
<comment type="similarity">
    <text evidence="1">Belongs to the methylthiotransferase family. MiaB subfamily.</text>
</comment>
<organism>
    <name type="scientific">Clavibacter sepedonicus</name>
    <name type="common">Clavibacter michiganensis subsp. sepedonicus</name>
    <dbReference type="NCBI Taxonomy" id="31964"/>
    <lineage>
        <taxon>Bacteria</taxon>
        <taxon>Bacillati</taxon>
        <taxon>Actinomycetota</taxon>
        <taxon>Actinomycetes</taxon>
        <taxon>Micrococcales</taxon>
        <taxon>Microbacteriaceae</taxon>
        <taxon>Clavibacter</taxon>
    </lineage>
</organism>